<keyword id="KW-0535">Nitrogen fixation</keyword>
<comment type="function">
    <text evidence="1">May protect the nitrogenase Fe-Mo protein from oxidative damage.</text>
</comment>
<comment type="subunit">
    <text evidence="1">Homotrimer; associates with NifD.</text>
</comment>
<comment type="similarity">
    <text evidence="1">Belongs to the NifW family.</text>
</comment>
<accession>Q07HZ5</accession>
<name>NIFW_RHOP5</name>
<evidence type="ECO:0000255" key="1">
    <source>
        <dbReference type="HAMAP-Rule" id="MF_00529"/>
    </source>
</evidence>
<proteinExistence type="inferred from homology"/>
<sequence length="112" mass="12279">MCSPSETKTSVIDQLKRAASAEEFFTTLGVDYDPQVVNVARLHILKRMGQYLASEDLAGLSNCAVTERCKAVLERAYADFVASSPLDQRVFKVLKDAVSPKRGAFVPLDALK</sequence>
<organism>
    <name type="scientific">Rhodopseudomonas palustris (strain BisA53)</name>
    <dbReference type="NCBI Taxonomy" id="316055"/>
    <lineage>
        <taxon>Bacteria</taxon>
        <taxon>Pseudomonadati</taxon>
        <taxon>Pseudomonadota</taxon>
        <taxon>Alphaproteobacteria</taxon>
        <taxon>Hyphomicrobiales</taxon>
        <taxon>Nitrobacteraceae</taxon>
        <taxon>Rhodopseudomonas</taxon>
    </lineage>
</organism>
<gene>
    <name evidence="1" type="primary">nifW</name>
    <name type="ordered locus">RPE_4519</name>
</gene>
<protein>
    <recommendedName>
        <fullName evidence="1">Nitrogenase-stabilizing/protective protein NifW</fullName>
    </recommendedName>
</protein>
<feature type="chain" id="PRO_1000060971" description="Nitrogenase-stabilizing/protective protein NifW">
    <location>
        <begin position="1"/>
        <end position="112"/>
    </location>
</feature>
<reference key="1">
    <citation type="submission" date="2006-09" db="EMBL/GenBank/DDBJ databases">
        <title>Complete sequence of Rhodopseudomonas palustris BisA53.</title>
        <authorList>
            <consortium name="US DOE Joint Genome Institute"/>
            <person name="Copeland A."/>
            <person name="Lucas S."/>
            <person name="Lapidus A."/>
            <person name="Barry K."/>
            <person name="Detter J.C."/>
            <person name="Glavina del Rio T."/>
            <person name="Hammon N."/>
            <person name="Israni S."/>
            <person name="Dalin E."/>
            <person name="Tice H."/>
            <person name="Pitluck S."/>
            <person name="Chain P."/>
            <person name="Malfatti S."/>
            <person name="Shin M."/>
            <person name="Vergez L."/>
            <person name="Schmutz J."/>
            <person name="Larimer F."/>
            <person name="Land M."/>
            <person name="Hauser L."/>
            <person name="Pelletier D.A."/>
            <person name="Kyrpides N."/>
            <person name="Kim E."/>
            <person name="Harwood C.S."/>
            <person name="Oda Y."/>
            <person name="Richardson P."/>
        </authorList>
    </citation>
    <scope>NUCLEOTIDE SEQUENCE [LARGE SCALE GENOMIC DNA]</scope>
    <source>
        <strain>BisA53</strain>
    </source>
</reference>
<dbReference type="EMBL" id="CP000463">
    <property type="protein sequence ID" value="ABJ08439.1"/>
    <property type="molecule type" value="Genomic_DNA"/>
</dbReference>
<dbReference type="STRING" id="316055.RPE_4519"/>
<dbReference type="KEGG" id="rpe:RPE_4519"/>
<dbReference type="eggNOG" id="ENOG50330W8">
    <property type="taxonomic scope" value="Bacteria"/>
</dbReference>
<dbReference type="HOGENOM" id="CLU_145318_0_0_5"/>
<dbReference type="OrthoDB" id="9811868at2"/>
<dbReference type="GO" id="GO:0009399">
    <property type="term" value="P:nitrogen fixation"/>
    <property type="evidence" value="ECO:0007669"/>
    <property type="project" value="UniProtKB-UniRule"/>
</dbReference>
<dbReference type="HAMAP" id="MF_00529">
    <property type="entry name" value="NifW"/>
    <property type="match status" value="1"/>
</dbReference>
<dbReference type="InterPro" id="IPR004893">
    <property type="entry name" value="NifW"/>
</dbReference>
<dbReference type="NCBIfam" id="NF002009">
    <property type="entry name" value="PRK00810.1"/>
    <property type="match status" value="1"/>
</dbReference>
<dbReference type="Pfam" id="PF03206">
    <property type="entry name" value="NifW"/>
    <property type="match status" value="1"/>
</dbReference>
<dbReference type="PIRSF" id="PIRSF005790">
    <property type="entry name" value="NifW"/>
    <property type="match status" value="1"/>
</dbReference>